<dbReference type="EC" id="2.1.1.-" evidence="1"/>
<dbReference type="EMBL" id="BA000019">
    <property type="protein sequence ID" value="BAB73590.1"/>
    <property type="molecule type" value="Genomic_DNA"/>
</dbReference>
<dbReference type="PIR" id="AE2042">
    <property type="entry name" value="AE2042"/>
</dbReference>
<dbReference type="RefSeq" id="WP_010996055.1">
    <property type="nucleotide sequence ID" value="NZ_RSCN01000017.1"/>
</dbReference>
<dbReference type="SMR" id="Q8YVT3"/>
<dbReference type="STRING" id="103690.gene:10493910"/>
<dbReference type="KEGG" id="ana:alr1891"/>
<dbReference type="eggNOG" id="COG2264">
    <property type="taxonomic scope" value="Bacteria"/>
</dbReference>
<dbReference type="OrthoDB" id="9785995at2"/>
<dbReference type="Proteomes" id="UP000002483">
    <property type="component" value="Chromosome"/>
</dbReference>
<dbReference type="GO" id="GO:0005737">
    <property type="term" value="C:cytoplasm"/>
    <property type="evidence" value="ECO:0007669"/>
    <property type="project" value="UniProtKB-SubCell"/>
</dbReference>
<dbReference type="GO" id="GO:0016279">
    <property type="term" value="F:protein-lysine N-methyltransferase activity"/>
    <property type="evidence" value="ECO:0007669"/>
    <property type="project" value="RHEA"/>
</dbReference>
<dbReference type="GO" id="GO:0032259">
    <property type="term" value="P:methylation"/>
    <property type="evidence" value="ECO:0007669"/>
    <property type="project" value="UniProtKB-KW"/>
</dbReference>
<dbReference type="CDD" id="cd02440">
    <property type="entry name" value="AdoMet_MTases"/>
    <property type="match status" value="1"/>
</dbReference>
<dbReference type="Gene3D" id="3.40.50.150">
    <property type="entry name" value="Vaccinia Virus protein VP39"/>
    <property type="match status" value="1"/>
</dbReference>
<dbReference type="HAMAP" id="MF_00735">
    <property type="entry name" value="Methyltr_PrmA"/>
    <property type="match status" value="1"/>
</dbReference>
<dbReference type="InterPro" id="IPR050078">
    <property type="entry name" value="Ribosomal_L11_MeTrfase_PrmA"/>
</dbReference>
<dbReference type="InterPro" id="IPR004498">
    <property type="entry name" value="Ribosomal_PrmA_MeTrfase"/>
</dbReference>
<dbReference type="InterPro" id="IPR029063">
    <property type="entry name" value="SAM-dependent_MTases_sf"/>
</dbReference>
<dbReference type="NCBIfam" id="TIGR00406">
    <property type="entry name" value="prmA"/>
    <property type="match status" value="1"/>
</dbReference>
<dbReference type="PANTHER" id="PTHR43648">
    <property type="entry name" value="ELECTRON TRANSFER FLAVOPROTEIN BETA SUBUNIT LYSINE METHYLTRANSFERASE"/>
    <property type="match status" value="1"/>
</dbReference>
<dbReference type="PANTHER" id="PTHR43648:SF1">
    <property type="entry name" value="ELECTRON TRANSFER FLAVOPROTEIN BETA SUBUNIT LYSINE METHYLTRANSFERASE"/>
    <property type="match status" value="1"/>
</dbReference>
<dbReference type="Pfam" id="PF06325">
    <property type="entry name" value="PrmA"/>
    <property type="match status" value="1"/>
</dbReference>
<dbReference type="PIRSF" id="PIRSF000401">
    <property type="entry name" value="RPL11_MTase"/>
    <property type="match status" value="1"/>
</dbReference>
<dbReference type="SUPFAM" id="SSF53335">
    <property type="entry name" value="S-adenosyl-L-methionine-dependent methyltransferases"/>
    <property type="match status" value="1"/>
</dbReference>
<reference key="1">
    <citation type="journal article" date="2001" name="DNA Res.">
        <title>Complete genomic sequence of the filamentous nitrogen-fixing cyanobacterium Anabaena sp. strain PCC 7120.</title>
        <authorList>
            <person name="Kaneko T."/>
            <person name="Nakamura Y."/>
            <person name="Wolk C.P."/>
            <person name="Kuritz T."/>
            <person name="Sasamoto S."/>
            <person name="Watanabe A."/>
            <person name="Iriguchi M."/>
            <person name="Ishikawa A."/>
            <person name="Kawashima K."/>
            <person name="Kimura T."/>
            <person name="Kishida Y."/>
            <person name="Kohara M."/>
            <person name="Matsumoto M."/>
            <person name="Matsuno A."/>
            <person name="Muraki A."/>
            <person name="Nakazaki N."/>
            <person name="Shimpo S."/>
            <person name="Sugimoto M."/>
            <person name="Takazawa M."/>
            <person name="Yamada M."/>
            <person name="Yasuda M."/>
            <person name="Tabata S."/>
        </authorList>
    </citation>
    <scope>NUCLEOTIDE SEQUENCE [LARGE SCALE GENOMIC DNA]</scope>
    <source>
        <strain>PCC 7120 / SAG 25.82 / UTEX 2576</strain>
    </source>
</reference>
<gene>
    <name evidence="1" type="primary">prmA</name>
    <name type="ordered locus">alr1891</name>
</gene>
<sequence length="306" mass="33764">MANTWWELQISCESALEDSVSWRLEDFGCRGTASESKGDSCLVKGYLPIFQAQLLDLAALGLWLQQDALCIGLSSPTLTWQLIDEEDWASSWKQYWHPQEIGDRFLINPAWLPSPENSDRLIIRLDPGVAFGTGNHATTQLCLESLEMRLSEVPKSFISKGGNQEPVIIADIGCGSGILSIGAVLLGAQKVYAVDTDPLAVQSTFSNRALNEVNPERLVPAEGSVDILKKLIERPVDGIVCNILADVIIQLVPEISEISKPSTWAIFSGILVEQSTSVAEALEKHGWVVATMWKRKEWCCLNVRRT</sequence>
<organism>
    <name type="scientific">Nostoc sp. (strain PCC 7120 / SAG 25.82 / UTEX 2576)</name>
    <dbReference type="NCBI Taxonomy" id="103690"/>
    <lineage>
        <taxon>Bacteria</taxon>
        <taxon>Bacillati</taxon>
        <taxon>Cyanobacteriota</taxon>
        <taxon>Cyanophyceae</taxon>
        <taxon>Nostocales</taxon>
        <taxon>Nostocaceae</taxon>
        <taxon>Nostoc</taxon>
    </lineage>
</organism>
<comment type="function">
    <text evidence="1">Methylates ribosomal protein L11.</text>
</comment>
<comment type="catalytic activity">
    <reaction evidence="1">
        <text>L-lysyl-[protein] + 3 S-adenosyl-L-methionine = N(6),N(6),N(6)-trimethyl-L-lysyl-[protein] + 3 S-adenosyl-L-homocysteine + 3 H(+)</text>
        <dbReference type="Rhea" id="RHEA:54192"/>
        <dbReference type="Rhea" id="RHEA-COMP:9752"/>
        <dbReference type="Rhea" id="RHEA-COMP:13826"/>
        <dbReference type="ChEBI" id="CHEBI:15378"/>
        <dbReference type="ChEBI" id="CHEBI:29969"/>
        <dbReference type="ChEBI" id="CHEBI:57856"/>
        <dbReference type="ChEBI" id="CHEBI:59789"/>
        <dbReference type="ChEBI" id="CHEBI:61961"/>
    </reaction>
</comment>
<comment type="subcellular location">
    <subcellularLocation>
        <location evidence="1">Cytoplasm</location>
    </subcellularLocation>
</comment>
<comment type="similarity">
    <text evidence="1">Belongs to the methyltransferase superfamily. PrmA family.</text>
</comment>
<keyword id="KW-0963">Cytoplasm</keyword>
<keyword id="KW-0489">Methyltransferase</keyword>
<keyword id="KW-1185">Reference proteome</keyword>
<keyword id="KW-0949">S-adenosyl-L-methionine</keyword>
<keyword id="KW-0808">Transferase</keyword>
<name>PRMA_NOSS1</name>
<accession>Q8YVT3</accession>
<proteinExistence type="inferred from homology"/>
<evidence type="ECO:0000255" key="1">
    <source>
        <dbReference type="HAMAP-Rule" id="MF_00735"/>
    </source>
</evidence>
<feature type="chain" id="PRO_0000192229" description="Ribosomal protein L11 methyltransferase">
    <location>
        <begin position="1"/>
        <end position="306"/>
    </location>
</feature>
<feature type="binding site" evidence="1">
    <location>
        <position position="139"/>
    </location>
    <ligand>
        <name>S-adenosyl-L-methionine</name>
        <dbReference type="ChEBI" id="CHEBI:59789"/>
    </ligand>
</feature>
<feature type="binding site" evidence="1">
    <location>
        <position position="173"/>
    </location>
    <ligand>
        <name>S-adenosyl-L-methionine</name>
        <dbReference type="ChEBI" id="CHEBI:59789"/>
    </ligand>
</feature>
<feature type="binding site" evidence="1">
    <location>
        <position position="195"/>
    </location>
    <ligand>
        <name>S-adenosyl-L-methionine</name>
        <dbReference type="ChEBI" id="CHEBI:59789"/>
    </ligand>
</feature>
<feature type="binding site" evidence="1">
    <location>
        <position position="242"/>
    </location>
    <ligand>
        <name>S-adenosyl-L-methionine</name>
        <dbReference type="ChEBI" id="CHEBI:59789"/>
    </ligand>
</feature>
<protein>
    <recommendedName>
        <fullName evidence="1">Ribosomal protein L11 methyltransferase</fullName>
        <shortName evidence="1">L11 Mtase</shortName>
        <ecNumber evidence="1">2.1.1.-</ecNumber>
    </recommendedName>
</protein>